<proteinExistence type="inferred from homology"/>
<evidence type="ECO:0000255" key="1">
    <source>
        <dbReference type="HAMAP-Rule" id="MF_00181"/>
    </source>
</evidence>
<sequence length="502" mass="54666">MEFSVKSGSPEKQRSACVVVGVFEPRRLSPVAEQLDKISDGYISSLLRRGDLEGKPGQMLLLHQVPGVLSERVLLVGCGKERELDERQYKQIINKTITTLNETGSMEAVCFLTELHVKGRDTYWKVRQAVETTKAGLYSFDQFKTNKAEPRRPLRKLVFNVPTRRELTIGEKAIAHGLAVAKGVRVCRDVANMPPNVCNPAYLASQARRLADAFDNITTKVIGEQEMAELGMNSYLAVARGSDNEAMMAIIEYKGHPDAKPIVLVGKGLTFDSGGISIKPAEGMDEMKYDMGGAASVLGTMHALAQLQLPINVIGVLAGCENMPGGNAYRPGDILTSMSGQTIEVLNTDAEGRLVLCDALTYVDRFDPETVIDVATLTGACIIALGHHTTGLLANHNPLAHELLNASEQAGDRAWRLPLFDEYQEQLESPFADMANIGGRPAGTITAAAFLSRFTKKYNWAHLDIAGTAWKSGKEKGSTGRPVPLLTQFLLNRSGVVIEEKE</sequence>
<protein>
    <recommendedName>
        <fullName evidence="1">Probable cytosol aminopeptidase</fullName>
        <ecNumber evidence="1">3.4.11.1</ecNumber>
    </recommendedName>
    <alternativeName>
        <fullName evidence="1">Leucine aminopeptidase</fullName>
        <shortName evidence="1">LAP</shortName>
        <ecNumber evidence="1">3.4.11.10</ecNumber>
    </alternativeName>
    <alternativeName>
        <fullName evidence="1">Leucyl aminopeptidase</fullName>
    </alternativeName>
</protein>
<name>AMPA_AERHH</name>
<comment type="function">
    <text evidence="1">Presumably involved in the processing and regular turnover of intracellular proteins. Catalyzes the removal of unsubstituted N-terminal amino acids from various peptides.</text>
</comment>
<comment type="catalytic activity">
    <reaction evidence="1">
        <text>Release of an N-terminal amino acid, Xaa-|-Yaa-, in which Xaa is preferably Leu, but may be other amino acids including Pro although not Arg or Lys, and Yaa may be Pro. Amino acid amides and methyl esters are also readily hydrolyzed, but rates on arylamides are exceedingly low.</text>
        <dbReference type="EC" id="3.4.11.1"/>
    </reaction>
</comment>
<comment type="catalytic activity">
    <reaction evidence="1">
        <text>Release of an N-terminal amino acid, preferentially leucine, but not glutamic or aspartic acids.</text>
        <dbReference type="EC" id="3.4.11.10"/>
    </reaction>
</comment>
<comment type="cofactor">
    <cofactor evidence="1">
        <name>Mn(2+)</name>
        <dbReference type="ChEBI" id="CHEBI:29035"/>
    </cofactor>
    <text evidence="1">Binds 2 manganese ions per subunit.</text>
</comment>
<comment type="subcellular location">
    <subcellularLocation>
        <location evidence="1">Cytoplasm</location>
    </subcellularLocation>
</comment>
<comment type="similarity">
    <text evidence="1">Belongs to the peptidase M17 family.</text>
</comment>
<reference key="1">
    <citation type="journal article" date="2006" name="J. Bacteriol.">
        <title>Genome sequence of Aeromonas hydrophila ATCC 7966T: jack of all trades.</title>
        <authorList>
            <person name="Seshadri R."/>
            <person name="Joseph S.W."/>
            <person name="Chopra A.K."/>
            <person name="Sha J."/>
            <person name="Shaw J."/>
            <person name="Graf J."/>
            <person name="Haft D.H."/>
            <person name="Wu M."/>
            <person name="Ren Q."/>
            <person name="Rosovitz M.J."/>
            <person name="Madupu R."/>
            <person name="Tallon L."/>
            <person name="Kim M."/>
            <person name="Jin S."/>
            <person name="Vuong H."/>
            <person name="Stine O.C."/>
            <person name="Ali A."/>
            <person name="Horneman A.J."/>
            <person name="Heidelberg J.F."/>
        </authorList>
    </citation>
    <scope>NUCLEOTIDE SEQUENCE [LARGE SCALE GENOMIC DNA]</scope>
    <source>
        <strain>ATCC 7966 / DSM 30187 / BCRC 13018 / CCUG 14551 / JCM 1027 / KCTC 2358 / NCIMB 9240 / NCTC 8049</strain>
    </source>
</reference>
<accession>A0KPF3</accession>
<dbReference type="EC" id="3.4.11.1" evidence="1"/>
<dbReference type="EC" id="3.4.11.10" evidence="1"/>
<dbReference type="EMBL" id="CP000462">
    <property type="protein sequence ID" value="ABK38760.1"/>
    <property type="molecule type" value="Genomic_DNA"/>
</dbReference>
<dbReference type="RefSeq" id="WP_011707422.1">
    <property type="nucleotide sequence ID" value="NC_008570.1"/>
</dbReference>
<dbReference type="RefSeq" id="YP_858154.1">
    <property type="nucleotide sequence ID" value="NC_008570.1"/>
</dbReference>
<dbReference type="SMR" id="A0KPF3"/>
<dbReference type="STRING" id="380703.AHA_3700"/>
<dbReference type="MEROPS" id="M17.003"/>
<dbReference type="EnsemblBacteria" id="ABK38760">
    <property type="protein sequence ID" value="ABK38760"/>
    <property type="gene ID" value="AHA_3700"/>
</dbReference>
<dbReference type="GeneID" id="4488026"/>
<dbReference type="KEGG" id="aha:AHA_3700"/>
<dbReference type="PATRIC" id="fig|380703.7.peg.3679"/>
<dbReference type="eggNOG" id="COG0260">
    <property type="taxonomic scope" value="Bacteria"/>
</dbReference>
<dbReference type="HOGENOM" id="CLU_013734_2_2_6"/>
<dbReference type="OrthoDB" id="9809354at2"/>
<dbReference type="Proteomes" id="UP000000756">
    <property type="component" value="Chromosome"/>
</dbReference>
<dbReference type="GO" id="GO:0005737">
    <property type="term" value="C:cytoplasm"/>
    <property type="evidence" value="ECO:0007669"/>
    <property type="project" value="UniProtKB-SubCell"/>
</dbReference>
<dbReference type="GO" id="GO:0030145">
    <property type="term" value="F:manganese ion binding"/>
    <property type="evidence" value="ECO:0007669"/>
    <property type="project" value="UniProtKB-UniRule"/>
</dbReference>
<dbReference type="GO" id="GO:0070006">
    <property type="term" value="F:metalloaminopeptidase activity"/>
    <property type="evidence" value="ECO:0007669"/>
    <property type="project" value="InterPro"/>
</dbReference>
<dbReference type="GO" id="GO:0006508">
    <property type="term" value="P:proteolysis"/>
    <property type="evidence" value="ECO:0007669"/>
    <property type="project" value="UniProtKB-KW"/>
</dbReference>
<dbReference type="CDD" id="cd00433">
    <property type="entry name" value="Peptidase_M17"/>
    <property type="match status" value="1"/>
</dbReference>
<dbReference type="FunFam" id="3.40.220.10:FF:000001">
    <property type="entry name" value="Probable cytosol aminopeptidase"/>
    <property type="match status" value="1"/>
</dbReference>
<dbReference type="FunFam" id="3.40.630.10:FF:000004">
    <property type="entry name" value="Probable cytosol aminopeptidase"/>
    <property type="match status" value="1"/>
</dbReference>
<dbReference type="Gene3D" id="3.40.220.10">
    <property type="entry name" value="Leucine Aminopeptidase, subunit E, domain 1"/>
    <property type="match status" value="1"/>
</dbReference>
<dbReference type="Gene3D" id="3.40.630.10">
    <property type="entry name" value="Zn peptidases"/>
    <property type="match status" value="1"/>
</dbReference>
<dbReference type="HAMAP" id="MF_00181">
    <property type="entry name" value="Cytosol_peptidase_M17"/>
    <property type="match status" value="1"/>
</dbReference>
<dbReference type="InterPro" id="IPR011356">
    <property type="entry name" value="Leucine_aapep/pepB"/>
</dbReference>
<dbReference type="InterPro" id="IPR043472">
    <property type="entry name" value="Macro_dom-like"/>
</dbReference>
<dbReference type="InterPro" id="IPR000819">
    <property type="entry name" value="Peptidase_M17_C"/>
</dbReference>
<dbReference type="InterPro" id="IPR023042">
    <property type="entry name" value="Peptidase_M17_leu_NH2_pept"/>
</dbReference>
<dbReference type="InterPro" id="IPR008283">
    <property type="entry name" value="Peptidase_M17_N"/>
</dbReference>
<dbReference type="NCBIfam" id="NF002072">
    <property type="entry name" value="PRK00913.1-1"/>
    <property type="match status" value="1"/>
</dbReference>
<dbReference type="NCBIfam" id="NF002073">
    <property type="entry name" value="PRK00913.1-2"/>
    <property type="match status" value="1"/>
</dbReference>
<dbReference type="NCBIfam" id="NF002074">
    <property type="entry name" value="PRK00913.1-4"/>
    <property type="match status" value="1"/>
</dbReference>
<dbReference type="NCBIfam" id="NF002077">
    <property type="entry name" value="PRK00913.2-4"/>
    <property type="match status" value="1"/>
</dbReference>
<dbReference type="PANTHER" id="PTHR11963:SF23">
    <property type="entry name" value="CYTOSOL AMINOPEPTIDASE"/>
    <property type="match status" value="1"/>
</dbReference>
<dbReference type="PANTHER" id="PTHR11963">
    <property type="entry name" value="LEUCINE AMINOPEPTIDASE-RELATED"/>
    <property type="match status" value="1"/>
</dbReference>
<dbReference type="Pfam" id="PF00883">
    <property type="entry name" value="Peptidase_M17"/>
    <property type="match status" value="1"/>
</dbReference>
<dbReference type="Pfam" id="PF02789">
    <property type="entry name" value="Peptidase_M17_N"/>
    <property type="match status" value="1"/>
</dbReference>
<dbReference type="PRINTS" id="PR00481">
    <property type="entry name" value="LAMNOPPTDASE"/>
</dbReference>
<dbReference type="SUPFAM" id="SSF52949">
    <property type="entry name" value="Macro domain-like"/>
    <property type="match status" value="1"/>
</dbReference>
<dbReference type="SUPFAM" id="SSF53187">
    <property type="entry name" value="Zn-dependent exopeptidases"/>
    <property type="match status" value="1"/>
</dbReference>
<dbReference type="PROSITE" id="PS00631">
    <property type="entry name" value="CYTOSOL_AP"/>
    <property type="match status" value="1"/>
</dbReference>
<organism>
    <name type="scientific">Aeromonas hydrophila subsp. hydrophila (strain ATCC 7966 / DSM 30187 / BCRC 13018 / CCUG 14551 / JCM 1027 / KCTC 2358 / NCIMB 9240 / NCTC 8049)</name>
    <dbReference type="NCBI Taxonomy" id="380703"/>
    <lineage>
        <taxon>Bacteria</taxon>
        <taxon>Pseudomonadati</taxon>
        <taxon>Pseudomonadota</taxon>
        <taxon>Gammaproteobacteria</taxon>
        <taxon>Aeromonadales</taxon>
        <taxon>Aeromonadaceae</taxon>
        <taxon>Aeromonas</taxon>
    </lineage>
</organism>
<feature type="chain" id="PRO_1000019875" description="Probable cytosol aminopeptidase">
    <location>
        <begin position="1"/>
        <end position="502"/>
    </location>
</feature>
<feature type="active site" evidence="1">
    <location>
        <position position="279"/>
    </location>
</feature>
<feature type="active site" evidence="1">
    <location>
        <position position="353"/>
    </location>
</feature>
<feature type="binding site" evidence="1">
    <location>
        <position position="267"/>
    </location>
    <ligand>
        <name>Mn(2+)</name>
        <dbReference type="ChEBI" id="CHEBI:29035"/>
        <label>2</label>
    </ligand>
</feature>
<feature type="binding site" evidence="1">
    <location>
        <position position="272"/>
    </location>
    <ligand>
        <name>Mn(2+)</name>
        <dbReference type="ChEBI" id="CHEBI:29035"/>
        <label>1</label>
    </ligand>
</feature>
<feature type="binding site" evidence="1">
    <location>
        <position position="272"/>
    </location>
    <ligand>
        <name>Mn(2+)</name>
        <dbReference type="ChEBI" id="CHEBI:29035"/>
        <label>2</label>
    </ligand>
</feature>
<feature type="binding site" evidence="1">
    <location>
        <position position="290"/>
    </location>
    <ligand>
        <name>Mn(2+)</name>
        <dbReference type="ChEBI" id="CHEBI:29035"/>
        <label>2</label>
    </ligand>
</feature>
<feature type="binding site" evidence="1">
    <location>
        <position position="349"/>
    </location>
    <ligand>
        <name>Mn(2+)</name>
        <dbReference type="ChEBI" id="CHEBI:29035"/>
        <label>1</label>
    </ligand>
</feature>
<feature type="binding site" evidence="1">
    <location>
        <position position="351"/>
    </location>
    <ligand>
        <name>Mn(2+)</name>
        <dbReference type="ChEBI" id="CHEBI:29035"/>
        <label>1</label>
    </ligand>
</feature>
<feature type="binding site" evidence="1">
    <location>
        <position position="351"/>
    </location>
    <ligand>
        <name>Mn(2+)</name>
        <dbReference type="ChEBI" id="CHEBI:29035"/>
        <label>2</label>
    </ligand>
</feature>
<gene>
    <name evidence="1" type="primary">pepA</name>
    <name type="ordered locus">AHA_3700</name>
</gene>
<keyword id="KW-0031">Aminopeptidase</keyword>
<keyword id="KW-0963">Cytoplasm</keyword>
<keyword id="KW-0378">Hydrolase</keyword>
<keyword id="KW-0464">Manganese</keyword>
<keyword id="KW-0479">Metal-binding</keyword>
<keyword id="KW-0645">Protease</keyword>
<keyword id="KW-1185">Reference proteome</keyword>